<organism>
    <name type="scientific">Neosartorya fischeri (strain ATCC 1020 / DSM 3700 / CBS 544.65 / FGSC A1164 / JCM 1740 / NRRL 181 / WB 181)</name>
    <name type="common">Aspergillus fischerianus</name>
    <dbReference type="NCBI Taxonomy" id="331117"/>
    <lineage>
        <taxon>Eukaryota</taxon>
        <taxon>Fungi</taxon>
        <taxon>Dikarya</taxon>
        <taxon>Ascomycota</taxon>
        <taxon>Pezizomycotina</taxon>
        <taxon>Eurotiomycetes</taxon>
        <taxon>Eurotiomycetidae</taxon>
        <taxon>Eurotiales</taxon>
        <taxon>Aspergillaceae</taxon>
        <taxon>Aspergillus</taxon>
        <taxon>Aspergillus subgen. Fumigati</taxon>
    </lineage>
</organism>
<name>ATG18_NEOFI</name>
<accession>A1DE24</accession>
<evidence type="ECO:0000250" key="1"/>
<evidence type="ECO:0000250" key="2">
    <source>
        <dbReference type="UniProtKB" id="P43601"/>
    </source>
</evidence>
<evidence type="ECO:0000256" key="3">
    <source>
        <dbReference type="SAM" id="MobiDB-lite"/>
    </source>
</evidence>
<evidence type="ECO:0000305" key="4"/>
<reference key="1">
    <citation type="journal article" date="2008" name="PLoS Genet.">
        <title>Genomic islands in the pathogenic filamentous fungus Aspergillus fumigatus.</title>
        <authorList>
            <person name="Fedorova N.D."/>
            <person name="Khaldi N."/>
            <person name="Joardar V.S."/>
            <person name="Maiti R."/>
            <person name="Amedeo P."/>
            <person name="Anderson M.J."/>
            <person name="Crabtree J."/>
            <person name="Silva J.C."/>
            <person name="Badger J.H."/>
            <person name="Albarraq A."/>
            <person name="Angiuoli S."/>
            <person name="Bussey H."/>
            <person name="Bowyer P."/>
            <person name="Cotty P.J."/>
            <person name="Dyer P.S."/>
            <person name="Egan A."/>
            <person name="Galens K."/>
            <person name="Fraser-Liggett C.M."/>
            <person name="Haas B.J."/>
            <person name="Inman J.M."/>
            <person name="Kent R."/>
            <person name="Lemieux S."/>
            <person name="Malavazi I."/>
            <person name="Orvis J."/>
            <person name="Roemer T."/>
            <person name="Ronning C.M."/>
            <person name="Sundaram J.P."/>
            <person name="Sutton G."/>
            <person name="Turner G."/>
            <person name="Venter J.C."/>
            <person name="White O.R."/>
            <person name="Whitty B.R."/>
            <person name="Youngman P."/>
            <person name="Wolfe K.H."/>
            <person name="Goldman G.H."/>
            <person name="Wortman J.R."/>
            <person name="Jiang B."/>
            <person name="Denning D.W."/>
            <person name="Nierman W.C."/>
        </authorList>
    </citation>
    <scope>NUCLEOTIDE SEQUENCE [LARGE SCALE GENOMIC DNA]</scope>
    <source>
        <strain>ATCC 1020 / DSM 3700 / CBS 544.65 / FGSC A1164 / JCM 1740 / NRRL 181 / WB 181</strain>
    </source>
</reference>
<keyword id="KW-0072">Autophagy</keyword>
<keyword id="KW-0967">Endosome</keyword>
<keyword id="KW-0472">Membrane</keyword>
<keyword id="KW-0653">Protein transport</keyword>
<keyword id="KW-1185">Reference proteome</keyword>
<keyword id="KW-0677">Repeat</keyword>
<keyword id="KW-0813">Transport</keyword>
<keyword id="KW-0926">Vacuole</keyword>
<keyword id="KW-0853">WD repeat</keyword>
<feature type="chain" id="PRO_0000318003" description="Autophagy-related protein 18">
    <location>
        <begin position="1"/>
        <end position="429"/>
    </location>
</feature>
<feature type="repeat" description="WD 1">
    <location>
        <begin position="1"/>
        <end position="36"/>
    </location>
</feature>
<feature type="repeat" description="WD 2">
    <location>
        <begin position="69"/>
        <end position="114"/>
    </location>
</feature>
<feature type="repeat" description="WD 3">
    <location>
        <begin position="139"/>
        <end position="182"/>
    </location>
</feature>
<feature type="repeat" description="WD 4">
    <location>
        <begin position="185"/>
        <end position="225"/>
    </location>
</feature>
<feature type="repeat" description="WD 5">
    <location>
        <begin position="230"/>
        <end position="269"/>
    </location>
</feature>
<feature type="repeat" description="WD 6">
    <location>
        <begin position="309"/>
        <end position="355"/>
    </location>
</feature>
<feature type="repeat" description="WD 7">
    <location>
        <begin position="367"/>
        <end position="407"/>
    </location>
</feature>
<feature type="region of interest" description="Disordered" evidence="3">
    <location>
        <begin position="262"/>
        <end position="308"/>
    </location>
</feature>
<feature type="short sequence motif" description="L/FRRG motif" evidence="2">
    <location>
        <begin position="226"/>
        <end position="230"/>
    </location>
</feature>
<feature type="compositionally biased region" description="Low complexity" evidence="3">
    <location>
        <begin position="262"/>
        <end position="275"/>
    </location>
</feature>
<proteinExistence type="inferred from homology"/>
<sequence length="429" mass="46744">MAMNFVTFNQDYSYLAVATSKGFRIFTTDPFAKSYETKEGNIAIIEMLFSTSLVALILSPRRLQITNTKRQSTICELTFPTTVLAVKLNRKRLVIVLEDQIYLYDIQTMKLLYTIQTSPNPNAICALSPSSDNCYLAYPLPQKAPPSSFNPPSHTPPGSTHVSPTSGEVLIFDTLKLEAINVIEAHRSPLACITLNSDGTLLATASDKGTIIRVFSVPDGHKLYQFRRGSMPSRIFSMSFNTTSTLLCVSSSTETIHLFKLSHPTSSPDASPSSPVGRDRSLSQSSSGYSPDRGDLTGDVGSSDFPARKHNGTLMGMIRRTSQNVGSTVAAKVGGYLPKGVSEMWEPTRDFAWFKLPKPNQTSGGSVNNGPLRSVVAMSSNTPQVMVVTSDGNFYVFSIDLSKGGEGTLTKQYSVLESNDRLGYSVTDY</sequence>
<dbReference type="EMBL" id="DS027696">
    <property type="protein sequence ID" value="EAW17631.1"/>
    <property type="molecule type" value="Genomic_DNA"/>
</dbReference>
<dbReference type="RefSeq" id="XP_001259528.1">
    <property type="nucleotide sequence ID" value="XM_001259527.1"/>
</dbReference>
<dbReference type="SMR" id="A1DE24"/>
<dbReference type="STRING" id="331117.A1DE24"/>
<dbReference type="EnsemblFungi" id="EAW17631">
    <property type="protein sequence ID" value="EAW17631"/>
    <property type="gene ID" value="NFIA_075610"/>
</dbReference>
<dbReference type="GeneID" id="4585990"/>
<dbReference type="KEGG" id="nfi:NFIA_075610"/>
<dbReference type="VEuPathDB" id="FungiDB:NFIA_075610"/>
<dbReference type="eggNOG" id="KOG2110">
    <property type="taxonomic scope" value="Eukaryota"/>
</dbReference>
<dbReference type="HOGENOM" id="CLU_025895_5_2_1"/>
<dbReference type="OMA" id="NIAILEM"/>
<dbReference type="OrthoDB" id="1667587at2759"/>
<dbReference type="Proteomes" id="UP000006702">
    <property type="component" value="Unassembled WGS sequence"/>
</dbReference>
<dbReference type="GO" id="GO:0010008">
    <property type="term" value="C:endosome membrane"/>
    <property type="evidence" value="ECO:0007669"/>
    <property type="project" value="UniProtKB-SubCell"/>
</dbReference>
<dbReference type="GO" id="GO:0034045">
    <property type="term" value="C:phagophore assembly site membrane"/>
    <property type="evidence" value="ECO:0007669"/>
    <property type="project" value="UniProtKB-SubCell"/>
</dbReference>
<dbReference type="GO" id="GO:0005774">
    <property type="term" value="C:vacuolar membrane"/>
    <property type="evidence" value="ECO:0007669"/>
    <property type="project" value="UniProtKB-SubCell"/>
</dbReference>
<dbReference type="GO" id="GO:0006914">
    <property type="term" value="P:autophagy"/>
    <property type="evidence" value="ECO:0007669"/>
    <property type="project" value="UniProtKB-KW"/>
</dbReference>
<dbReference type="GO" id="GO:0015031">
    <property type="term" value="P:protein transport"/>
    <property type="evidence" value="ECO:0007669"/>
    <property type="project" value="UniProtKB-KW"/>
</dbReference>
<dbReference type="FunFam" id="2.130.10.10:FF:000965">
    <property type="entry name" value="Autophagy-like protein 18 Atg18"/>
    <property type="match status" value="1"/>
</dbReference>
<dbReference type="Gene3D" id="2.130.10.10">
    <property type="entry name" value="YVTN repeat-like/Quinoprotein amine dehydrogenase"/>
    <property type="match status" value="1"/>
</dbReference>
<dbReference type="InterPro" id="IPR048720">
    <property type="entry name" value="PROPPIN"/>
</dbReference>
<dbReference type="InterPro" id="IPR015943">
    <property type="entry name" value="WD40/YVTN_repeat-like_dom_sf"/>
</dbReference>
<dbReference type="InterPro" id="IPR036322">
    <property type="entry name" value="WD40_repeat_dom_sf"/>
</dbReference>
<dbReference type="InterPro" id="IPR001680">
    <property type="entry name" value="WD40_rpt"/>
</dbReference>
<dbReference type="PANTHER" id="PTHR11227">
    <property type="entry name" value="WD-REPEAT PROTEIN INTERACTING WITH PHOSPHOINOSIDES WIPI -RELATED"/>
    <property type="match status" value="1"/>
</dbReference>
<dbReference type="Pfam" id="PF21032">
    <property type="entry name" value="PROPPIN"/>
    <property type="match status" value="2"/>
</dbReference>
<dbReference type="SMART" id="SM00320">
    <property type="entry name" value="WD40"/>
    <property type="match status" value="2"/>
</dbReference>
<dbReference type="SUPFAM" id="SSF50978">
    <property type="entry name" value="WD40 repeat-like"/>
    <property type="match status" value="1"/>
</dbReference>
<comment type="function">
    <text evidence="1">The PI(3,5)P2 regulatory complex regulates both the synthesis and turnover of phosphatidylinositol 3,5-bisphosphate (PtdIns(3,5)P2). Necessary for proper vacuole morphology. Plays an important role in osmotically-induced vacuole fragmentation. Required for cytoplasm to vacuole transport (Cvt) vesicle formation, pexophagy and starvation-induced autophagy. Involved in correct atg9 trafficking to the pre-autophagosomal structure. Might also be involved in premeiotic DNA replication (By similarity).</text>
</comment>
<comment type="subunit">
    <text evidence="1">Component of the PI(3,5)P2 regulatory complex.</text>
</comment>
<comment type="subcellular location">
    <subcellularLocation>
        <location evidence="1">Preautophagosomal structure membrane</location>
        <topology evidence="1">Peripheral membrane protein</topology>
    </subcellularLocation>
    <subcellularLocation>
        <location evidence="1">Vacuole membrane</location>
        <topology evidence="1">Peripheral membrane protein</topology>
    </subcellularLocation>
    <subcellularLocation>
        <location evidence="1">Endosome membrane</location>
        <topology evidence="1">Peripheral membrane protein</topology>
    </subcellularLocation>
</comment>
<comment type="domain">
    <text evidence="2">The N-terminus might form a beta-propeller domain involved in specific binding to phosphatidylinositol 3,5-bisphosphate (PIP2), leading to the association of the protein to the membrane.</text>
</comment>
<comment type="domain">
    <text evidence="2">The L/FRRG motif is essential for the cytoplasm to vacuole transport (Cvt) pathway, for the recruitment of atg8 and atg16 to the PAS in nutrient-rich medium, and for its recruitment to and dissociation from the PAS under starvation conditions.</text>
</comment>
<comment type="similarity">
    <text evidence="4">Belongs to the WD repeat PROPPIN family.</text>
</comment>
<gene>
    <name type="primary">atg18</name>
    <name type="ORF">NFIA_075610</name>
</gene>
<protein>
    <recommendedName>
        <fullName>Autophagy-related protein 18</fullName>
    </recommendedName>
</protein>